<name>LOLD_WIGBR</name>
<organism>
    <name type="scientific">Wigglesworthia glossinidia brevipalpis</name>
    <dbReference type="NCBI Taxonomy" id="36870"/>
    <lineage>
        <taxon>Bacteria</taxon>
        <taxon>Pseudomonadati</taxon>
        <taxon>Pseudomonadota</taxon>
        <taxon>Gammaproteobacteria</taxon>
        <taxon>Enterobacterales</taxon>
        <taxon>Erwiniaceae</taxon>
        <taxon>Wigglesworthia</taxon>
    </lineage>
</organism>
<accession>Q8D3A0</accession>
<feature type="chain" id="PRO_0000092467" description="Lipoprotein-releasing system ATP-binding protein LolD">
    <location>
        <begin position="1"/>
        <end position="229"/>
    </location>
</feature>
<feature type="domain" description="ABC transporter" evidence="1">
    <location>
        <begin position="7"/>
        <end position="229"/>
    </location>
</feature>
<feature type="binding site" evidence="1">
    <location>
        <begin position="43"/>
        <end position="50"/>
    </location>
    <ligand>
        <name>ATP</name>
        <dbReference type="ChEBI" id="CHEBI:30616"/>
    </ligand>
</feature>
<dbReference type="EC" id="7.6.2.-" evidence="1"/>
<dbReference type="EMBL" id="BA000021">
    <property type="protein sequence ID" value="BAC24247.1"/>
    <property type="molecule type" value="Genomic_DNA"/>
</dbReference>
<dbReference type="SMR" id="Q8D3A0"/>
<dbReference type="STRING" id="36870.gene:10368579"/>
<dbReference type="KEGG" id="wbr:ycfV"/>
<dbReference type="eggNOG" id="COG1136">
    <property type="taxonomic scope" value="Bacteria"/>
</dbReference>
<dbReference type="HOGENOM" id="CLU_000604_1_22_6"/>
<dbReference type="OrthoDB" id="9801477at2"/>
<dbReference type="Proteomes" id="UP000000562">
    <property type="component" value="Chromosome"/>
</dbReference>
<dbReference type="GO" id="GO:0005886">
    <property type="term" value="C:plasma membrane"/>
    <property type="evidence" value="ECO:0007669"/>
    <property type="project" value="UniProtKB-SubCell"/>
</dbReference>
<dbReference type="GO" id="GO:0005524">
    <property type="term" value="F:ATP binding"/>
    <property type="evidence" value="ECO:0007669"/>
    <property type="project" value="UniProtKB-KW"/>
</dbReference>
<dbReference type="GO" id="GO:0016887">
    <property type="term" value="F:ATP hydrolysis activity"/>
    <property type="evidence" value="ECO:0007669"/>
    <property type="project" value="InterPro"/>
</dbReference>
<dbReference type="GO" id="GO:0044873">
    <property type="term" value="P:lipoprotein localization to membrane"/>
    <property type="evidence" value="ECO:0007669"/>
    <property type="project" value="InterPro"/>
</dbReference>
<dbReference type="CDD" id="cd03255">
    <property type="entry name" value="ABC_MJ0796_LolCDE_FtsE"/>
    <property type="match status" value="1"/>
</dbReference>
<dbReference type="FunFam" id="3.40.50.300:FF:000230">
    <property type="entry name" value="Lipoprotein-releasing system ATP-binding protein LolD"/>
    <property type="match status" value="1"/>
</dbReference>
<dbReference type="Gene3D" id="3.40.50.300">
    <property type="entry name" value="P-loop containing nucleotide triphosphate hydrolases"/>
    <property type="match status" value="1"/>
</dbReference>
<dbReference type="InterPro" id="IPR003593">
    <property type="entry name" value="AAA+_ATPase"/>
</dbReference>
<dbReference type="InterPro" id="IPR003439">
    <property type="entry name" value="ABC_transporter-like_ATP-bd"/>
</dbReference>
<dbReference type="InterPro" id="IPR017871">
    <property type="entry name" value="ABC_transporter-like_CS"/>
</dbReference>
<dbReference type="InterPro" id="IPR011924">
    <property type="entry name" value="LolD_lipo_ATP-bd"/>
</dbReference>
<dbReference type="InterPro" id="IPR017911">
    <property type="entry name" value="MacB-like_ATP-bd"/>
</dbReference>
<dbReference type="InterPro" id="IPR027417">
    <property type="entry name" value="P-loop_NTPase"/>
</dbReference>
<dbReference type="NCBIfam" id="TIGR02211">
    <property type="entry name" value="LolD_lipo_ex"/>
    <property type="match status" value="1"/>
</dbReference>
<dbReference type="PANTHER" id="PTHR42798:SF2">
    <property type="entry name" value="ABC TRANSPORTER ATP-BINDING PROTEIN MG467-RELATED"/>
    <property type="match status" value="1"/>
</dbReference>
<dbReference type="PANTHER" id="PTHR42798">
    <property type="entry name" value="LIPOPROTEIN-RELEASING SYSTEM ATP-BINDING PROTEIN LOLD"/>
    <property type="match status" value="1"/>
</dbReference>
<dbReference type="Pfam" id="PF00005">
    <property type="entry name" value="ABC_tran"/>
    <property type="match status" value="1"/>
</dbReference>
<dbReference type="SMART" id="SM00382">
    <property type="entry name" value="AAA"/>
    <property type="match status" value="1"/>
</dbReference>
<dbReference type="SUPFAM" id="SSF52540">
    <property type="entry name" value="P-loop containing nucleoside triphosphate hydrolases"/>
    <property type="match status" value="1"/>
</dbReference>
<dbReference type="PROSITE" id="PS00211">
    <property type="entry name" value="ABC_TRANSPORTER_1"/>
    <property type="match status" value="1"/>
</dbReference>
<dbReference type="PROSITE" id="PS50893">
    <property type="entry name" value="ABC_TRANSPORTER_2"/>
    <property type="match status" value="1"/>
</dbReference>
<dbReference type="PROSITE" id="PS51244">
    <property type="entry name" value="LOLD"/>
    <property type="match status" value="1"/>
</dbReference>
<evidence type="ECO:0000255" key="1">
    <source>
        <dbReference type="HAMAP-Rule" id="MF_01708"/>
    </source>
</evidence>
<proteinExistence type="inferred from homology"/>
<gene>
    <name evidence="1" type="primary">lolD</name>
    <name type="ordered locus">WIGBR1010</name>
</gene>
<reference key="1">
    <citation type="journal article" date="2002" name="Nat. Genet.">
        <title>Genome sequence of the endocellular obligate symbiont of tsetse flies, Wigglesworthia glossinidia.</title>
        <authorList>
            <person name="Akman L."/>
            <person name="Yamashita A."/>
            <person name="Watanabe H."/>
            <person name="Oshima K."/>
            <person name="Shiba T."/>
            <person name="Hattori M."/>
            <person name="Aksoy S."/>
        </authorList>
    </citation>
    <scope>NUCLEOTIDE SEQUENCE [LARGE SCALE GENOMIC DNA]</scope>
</reference>
<keyword id="KW-0067">ATP-binding</keyword>
<keyword id="KW-1003">Cell membrane</keyword>
<keyword id="KW-0472">Membrane</keyword>
<keyword id="KW-0547">Nucleotide-binding</keyword>
<keyword id="KW-1185">Reference proteome</keyword>
<keyword id="KW-1278">Translocase</keyword>
<keyword id="KW-0813">Transport</keyword>
<sequence>MNNMVLLKCKNVTKTYKTNKKKIIILNNINLSIYNSETISIIGDSGSGKSTLLYLLSGLDNPTTGKITFKGKEINKLSSSDRSYLRNKNFGFIYQFHHLLTDFSVLENVAMPALIGNFSVKHAKNLAYKLLLEVGLKNRINHKPSEISGGERQRAAIARSLINNPKIVFADEPTGNLDNTSSKKFFCLLKKVNVEKKTAFLVVTHNIKLAKKLDKTLEIKNGKLYKKNL</sequence>
<comment type="function">
    <text evidence="1">Part of the ABC transporter complex LolCDE involved in the translocation of lipoproteins, in an ATP-dependent manner.</text>
</comment>
<comment type="subunit">
    <text evidence="1">The complex is composed of two ATP-binding proteins (LolD) and two transmembrane proteins (LolC and LolE).</text>
</comment>
<comment type="subcellular location">
    <subcellularLocation>
        <location evidence="1">Cell membrane</location>
        <topology evidence="1">Peripheral membrane protein</topology>
    </subcellularLocation>
</comment>
<comment type="similarity">
    <text evidence="1">Belongs to the ABC transporter superfamily. Lipoprotein translocase (TC 3.A.1.125) family.</text>
</comment>
<protein>
    <recommendedName>
        <fullName evidence="1">Lipoprotein-releasing system ATP-binding protein LolD</fullName>
        <ecNumber evidence="1">7.6.2.-</ecNumber>
    </recommendedName>
</protein>